<name>RNAS1_LEMCA</name>
<proteinExistence type="inferred from homology"/>
<protein>
    <recommendedName>
        <fullName>Ribonuclease pancreatic</fullName>
        <ecNumber>4.6.1.18</ecNumber>
    </recommendedName>
    <alternativeName>
        <fullName>RNase 1</fullName>
    </alternativeName>
    <alternativeName>
        <fullName>RNase A</fullName>
    </alternativeName>
</protein>
<dbReference type="EC" id="4.6.1.18"/>
<dbReference type="EMBL" id="AF449641">
    <property type="protein sequence ID" value="AAL87062.1"/>
    <property type="molecule type" value="Genomic_DNA"/>
</dbReference>
<dbReference type="SMR" id="Q8SQ04"/>
<dbReference type="GlyCosmos" id="Q8SQ04">
    <property type="glycosylation" value="3 sites, No reported glycans"/>
</dbReference>
<dbReference type="GO" id="GO:0005576">
    <property type="term" value="C:extracellular region"/>
    <property type="evidence" value="ECO:0007669"/>
    <property type="project" value="UniProtKB-SubCell"/>
</dbReference>
<dbReference type="GO" id="GO:0016829">
    <property type="term" value="F:lyase activity"/>
    <property type="evidence" value="ECO:0007669"/>
    <property type="project" value="UniProtKB-KW"/>
</dbReference>
<dbReference type="GO" id="GO:0003676">
    <property type="term" value="F:nucleic acid binding"/>
    <property type="evidence" value="ECO:0007669"/>
    <property type="project" value="InterPro"/>
</dbReference>
<dbReference type="GO" id="GO:0004522">
    <property type="term" value="F:ribonuclease A activity"/>
    <property type="evidence" value="ECO:0007669"/>
    <property type="project" value="UniProtKB-EC"/>
</dbReference>
<dbReference type="GO" id="GO:0050830">
    <property type="term" value="P:defense response to Gram-positive bacterium"/>
    <property type="evidence" value="ECO:0007669"/>
    <property type="project" value="TreeGrafter"/>
</dbReference>
<dbReference type="CDD" id="cd06265">
    <property type="entry name" value="RNase_A_canonical"/>
    <property type="match status" value="1"/>
</dbReference>
<dbReference type="FunFam" id="3.10.130.10:FF:000001">
    <property type="entry name" value="Ribonuclease pancreatic"/>
    <property type="match status" value="1"/>
</dbReference>
<dbReference type="Gene3D" id="3.10.130.10">
    <property type="entry name" value="Ribonuclease A-like domain"/>
    <property type="match status" value="1"/>
</dbReference>
<dbReference type="InterPro" id="IPR001427">
    <property type="entry name" value="RNaseA"/>
</dbReference>
<dbReference type="InterPro" id="IPR036816">
    <property type="entry name" value="RNaseA-like_dom_sf"/>
</dbReference>
<dbReference type="InterPro" id="IPR023411">
    <property type="entry name" value="RNaseA_AS"/>
</dbReference>
<dbReference type="InterPro" id="IPR023412">
    <property type="entry name" value="RNaseA_domain"/>
</dbReference>
<dbReference type="PANTHER" id="PTHR11437">
    <property type="entry name" value="RIBONUCLEASE"/>
    <property type="match status" value="1"/>
</dbReference>
<dbReference type="PANTHER" id="PTHR11437:SF24">
    <property type="entry name" value="RIBONUCLEASE PANCREATIC"/>
    <property type="match status" value="1"/>
</dbReference>
<dbReference type="Pfam" id="PF00074">
    <property type="entry name" value="RnaseA"/>
    <property type="match status" value="1"/>
</dbReference>
<dbReference type="PRINTS" id="PR00794">
    <property type="entry name" value="RIBONUCLEASE"/>
</dbReference>
<dbReference type="SMART" id="SM00092">
    <property type="entry name" value="RNAse_Pc"/>
    <property type="match status" value="1"/>
</dbReference>
<dbReference type="SUPFAM" id="SSF54076">
    <property type="entry name" value="RNase A-like"/>
    <property type="match status" value="1"/>
</dbReference>
<dbReference type="PROSITE" id="PS00127">
    <property type="entry name" value="RNASE_PANCREATIC"/>
    <property type="match status" value="1"/>
</dbReference>
<comment type="function">
    <text evidence="1">Endonuclease that catalyzes the cleavage of RNA on the 3' side of pyrimidine nucleotides. Acts on single-stranded and double-stranded RNA (By similarity).</text>
</comment>
<comment type="catalytic activity">
    <reaction>
        <text>an [RNA] containing cytidine + H2O = an [RNA]-3'-cytidine-3'-phosphate + a 5'-hydroxy-ribonucleotide-3'-[RNA].</text>
        <dbReference type="EC" id="4.6.1.18"/>
    </reaction>
</comment>
<comment type="catalytic activity">
    <reaction>
        <text>an [RNA] containing uridine + H2O = an [RNA]-3'-uridine-3'-phosphate + a 5'-hydroxy-ribonucleotide-3'-[RNA].</text>
        <dbReference type="EC" id="4.6.1.18"/>
    </reaction>
</comment>
<comment type="subunit">
    <text evidence="1">Monomer. Interacts with and forms tight 1:1 complexes with RNH1. Dimerization of two such complexes may occur. Interaction with RNH1 inhibits this protein (By similarity).</text>
</comment>
<comment type="subcellular location">
    <subcellularLocation>
        <location evidence="1">Secreted</location>
    </subcellularLocation>
</comment>
<comment type="similarity">
    <text evidence="3">Belongs to the pancreatic ribonuclease family.</text>
</comment>
<keyword id="KW-1015">Disulfide bond</keyword>
<keyword id="KW-0255">Endonuclease</keyword>
<keyword id="KW-0325">Glycoprotein</keyword>
<keyword id="KW-0378">Hydrolase</keyword>
<keyword id="KW-0456">Lyase</keyword>
<keyword id="KW-0540">Nuclease</keyword>
<keyword id="KW-0964">Secreted</keyword>
<keyword id="KW-0732">Signal</keyword>
<gene>
    <name type="primary">RNASE1</name>
</gene>
<accession>Q8SQ04</accession>
<feature type="signal peptide" evidence="1">
    <location>
        <begin position="1"/>
        <end position="28"/>
    </location>
</feature>
<feature type="chain" id="PRO_0000030924" description="Ribonuclease pancreatic">
    <location>
        <begin position="29"/>
        <end position="156"/>
    </location>
</feature>
<feature type="active site" description="Proton acceptor" evidence="1">
    <location>
        <position position="40"/>
    </location>
</feature>
<feature type="active site" description="Proton donor" evidence="1">
    <location>
        <position position="147"/>
    </location>
</feature>
<feature type="binding site" evidence="1">
    <location>
        <position position="35"/>
    </location>
    <ligand>
        <name>substrate</name>
    </ligand>
</feature>
<feature type="binding site" evidence="1">
    <location>
        <position position="38"/>
    </location>
    <ligand>
        <name>substrate</name>
    </ligand>
</feature>
<feature type="binding site" evidence="1">
    <location>
        <begin position="69"/>
        <end position="73"/>
    </location>
    <ligand>
        <name>substrate</name>
    </ligand>
</feature>
<feature type="binding site" evidence="1">
    <location>
        <position position="94"/>
    </location>
    <ligand>
        <name>substrate</name>
    </ligand>
</feature>
<feature type="binding site" evidence="1">
    <location>
        <position position="113"/>
    </location>
    <ligand>
        <name>substrate</name>
    </ligand>
</feature>
<feature type="glycosylation site" description="N-linked (GlcNAc...) asparagine" evidence="2">
    <location>
        <position position="62"/>
    </location>
</feature>
<feature type="glycosylation site" description="N-linked (GlcNAc...) asparagine" evidence="2">
    <location>
        <position position="90"/>
    </location>
</feature>
<feature type="glycosylation site" description="N-linked (GlcNAc...) asparagine" evidence="2">
    <location>
        <position position="104"/>
    </location>
</feature>
<feature type="disulfide bond" evidence="1">
    <location>
        <begin position="54"/>
        <end position="112"/>
    </location>
</feature>
<feature type="disulfide bond" evidence="1">
    <location>
        <begin position="68"/>
        <end position="123"/>
    </location>
</feature>
<feature type="disulfide bond" evidence="1">
    <location>
        <begin position="86"/>
        <end position="138"/>
    </location>
</feature>
<feature type="disulfide bond" evidence="1">
    <location>
        <begin position="93"/>
        <end position="100"/>
    </location>
</feature>
<evidence type="ECO:0000250" key="1"/>
<evidence type="ECO:0000255" key="2"/>
<evidence type="ECO:0000305" key="3"/>
<organism>
    <name type="scientific">Lemur catta</name>
    <name type="common">Ring-tailed lemur</name>
    <dbReference type="NCBI Taxonomy" id="9447"/>
    <lineage>
        <taxon>Eukaryota</taxon>
        <taxon>Metazoa</taxon>
        <taxon>Chordata</taxon>
        <taxon>Craniata</taxon>
        <taxon>Vertebrata</taxon>
        <taxon>Euteleostomi</taxon>
        <taxon>Mammalia</taxon>
        <taxon>Eutheria</taxon>
        <taxon>Euarchontoglires</taxon>
        <taxon>Primates</taxon>
        <taxon>Strepsirrhini</taxon>
        <taxon>Lemuriformes</taxon>
        <taxon>Lemuridae</taxon>
        <taxon>Lemur</taxon>
    </lineage>
</organism>
<reference key="1">
    <citation type="journal article" date="2002" name="Nat. Genet.">
        <title>Adaptive evolution of a duplicated pancreatic ribonuclease gene in a leaf-eating monkey.</title>
        <authorList>
            <person name="Zhang J."/>
            <person name="Zhang Y.-P."/>
            <person name="Rosenberg H.F."/>
        </authorList>
    </citation>
    <scope>NUCLEOTIDE SEQUENCE [GENOMIC DNA]</scope>
</reference>
<sequence length="156" mass="17528">MALEKSLVLLPLLVLALLVLGWIQPSLGKESRAMKFQRQHMDPGSSSSSSSTYCNQMMRRRNMTNGWCKPVNTFVHEPLVDVQAICFQENVTCKNGQTNCYKSNSTMHITDCRLTGSSKYPNCAYRTSQKERRIIVACEGSPYVPVHFDASVEDST</sequence>